<feature type="chain" id="PRO_1000117648" description="Serine hydroxymethyltransferase">
    <location>
        <begin position="1"/>
        <end position="412"/>
    </location>
</feature>
<feature type="binding site" evidence="1">
    <location>
        <position position="117"/>
    </location>
    <ligand>
        <name>(6S)-5,6,7,8-tetrahydrofolate</name>
        <dbReference type="ChEBI" id="CHEBI:57453"/>
    </ligand>
</feature>
<feature type="binding site" evidence="1">
    <location>
        <begin position="121"/>
        <end position="123"/>
    </location>
    <ligand>
        <name>(6S)-5,6,7,8-tetrahydrofolate</name>
        <dbReference type="ChEBI" id="CHEBI:57453"/>
    </ligand>
</feature>
<feature type="binding site" evidence="1">
    <location>
        <position position="241"/>
    </location>
    <ligand>
        <name>(6S)-5,6,7,8-tetrahydrofolate</name>
        <dbReference type="ChEBI" id="CHEBI:57453"/>
    </ligand>
</feature>
<feature type="site" description="Plays an important role in substrate specificity" evidence="1">
    <location>
        <position position="225"/>
    </location>
</feature>
<feature type="modified residue" description="N6-(pyridoxal phosphate)lysine" evidence="1">
    <location>
        <position position="226"/>
    </location>
</feature>
<accession>B9DMF3</accession>
<name>GLYA_STACT</name>
<keyword id="KW-0028">Amino-acid biosynthesis</keyword>
<keyword id="KW-0963">Cytoplasm</keyword>
<keyword id="KW-0554">One-carbon metabolism</keyword>
<keyword id="KW-0663">Pyridoxal phosphate</keyword>
<keyword id="KW-1185">Reference proteome</keyword>
<keyword id="KW-0808">Transferase</keyword>
<sequence>MSFIEKEDKAVFEAIQNEYNRQNNNIELIASENFVSEAVMEAQGSVLTNKYAEGYPGRRYYGGCQYVDITETLAIERAKELFGAEHVNVQPHSGSQANMAVYLVALDHGDTVLGMNLSHGGHLTHGSPVNFSGKFYNFVEYGVDKETERIDYEEVRRLAKENKPKLIVAGASAYPREIDFKKFKEIADEVGAKLMVDMAHIAGLVAAGLHQNPVDYADFVTTTTHKTLRGPRGGMILTKEEYAKQIDKTIFPGIQGGPLEHVIAAKAVAFGEALNPDFKDYQEQVVKNAKALADTLIEEGFRVVSGGTDNHLVAVDVKGSFGITGKEAEEALDEVGITCNKNTIPFDQEKPFVTSGLRLGTPAATTRGFEEADFEEVAKIISLVVQNPKDEAKLKEASDRVAALTSKHPLYK</sequence>
<gene>
    <name evidence="1" type="primary">glyA</name>
    <name type="ordered locus">Sca_1616</name>
</gene>
<evidence type="ECO:0000255" key="1">
    <source>
        <dbReference type="HAMAP-Rule" id="MF_00051"/>
    </source>
</evidence>
<proteinExistence type="inferred from homology"/>
<organism>
    <name type="scientific">Staphylococcus carnosus (strain TM300)</name>
    <dbReference type="NCBI Taxonomy" id="396513"/>
    <lineage>
        <taxon>Bacteria</taxon>
        <taxon>Bacillati</taxon>
        <taxon>Bacillota</taxon>
        <taxon>Bacilli</taxon>
        <taxon>Bacillales</taxon>
        <taxon>Staphylococcaceae</taxon>
        <taxon>Staphylococcus</taxon>
    </lineage>
</organism>
<reference key="1">
    <citation type="journal article" date="2009" name="Appl. Environ. Microbiol.">
        <title>Genome analysis of the meat starter culture bacterium Staphylococcus carnosus TM300.</title>
        <authorList>
            <person name="Rosenstein R."/>
            <person name="Nerz C."/>
            <person name="Biswas L."/>
            <person name="Resch A."/>
            <person name="Raddatz G."/>
            <person name="Schuster S.C."/>
            <person name="Goetz F."/>
        </authorList>
    </citation>
    <scope>NUCLEOTIDE SEQUENCE [LARGE SCALE GENOMIC DNA]</scope>
    <source>
        <strain>TM300</strain>
    </source>
</reference>
<dbReference type="EC" id="2.1.2.1" evidence="1"/>
<dbReference type="EMBL" id="AM295250">
    <property type="protein sequence ID" value="CAL28522.1"/>
    <property type="molecule type" value="Genomic_DNA"/>
</dbReference>
<dbReference type="RefSeq" id="WP_015900862.1">
    <property type="nucleotide sequence ID" value="NC_012121.1"/>
</dbReference>
<dbReference type="SMR" id="B9DMF3"/>
<dbReference type="GeneID" id="93794070"/>
<dbReference type="KEGG" id="sca:SCA_1616"/>
<dbReference type="eggNOG" id="COG0112">
    <property type="taxonomic scope" value="Bacteria"/>
</dbReference>
<dbReference type="HOGENOM" id="CLU_022477_2_1_9"/>
<dbReference type="OrthoDB" id="9803846at2"/>
<dbReference type="BioCyc" id="SCAR396513:SCA_RS08210-MONOMER"/>
<dbReference type="UniPathway" id="UPA00193"/>
<dbReference type="UniPathway" id="UPA00288">
    <property type="reaction ID" value="UER01023"/>
</dbReference>
<dbReference type="Proteomes" id="UP000000444">
    <property type="component" value="Chromosome"/>
</dbReference>
<dbReference type="GO" id="GO:0005829">
    <property type="term" value="C:cytosol"/>
    <property type="evidence" value="ECO:0007669"/>
    <property type="project" value="TreeGrafter"/>
</dbReference>
<dbReference type="GO" id="GO:0004372">
    <property type="term" value="F:glycine hydroxymethyltransferase activity"/>
    <property type="evidence" value="ECO:0007669"/>
    <property type="project" value="UniProtKB-UniRule"/>
</dbReference>
<dbReference type="GO" id="GO:0030170">
    <property type="term" value="F:pyridoxal phosphate binding"/>
    <property type="evidence" value="ECO:0007669"/>
    <property type="project" value="UniProtKB-UniRule"/>
</dbReference>
<dbReference type="GO" id="GO:0019264">
    <property type="term" value="P:glycine biosynthetic process from serine"/>
    <property type="evidence" value="ECO:0007669"/>
    <property type="project" value="UniProtKB-UniRule"/>
</dbReference>
<dbReference type="GO" id="GO:0035999">
    <property type="term" value="P:tetrahydrofolate interconversion"/>
    <property type="evidence" value="ECO:0007669"/>
    <property type="project" value="UniProtKB-UniRule"/>
</dbReference>
<dbReference type="CDD" id="cd00378">
    <property type="entry name" value="SHMT"/>
    <property type="match status" value="1"/>
</dbReference>
<dbReference type="FunFam" id="3.40.640.10:FF:000001">
    <property type="entry name" value="Serine hydroxymethyltransferase"/>
    <property type="match status" value="1"/>
</dbReference>
<dbReference type="FunFam" id="3.90.1150.10:FF:000003">
    <property type="entry name" value="Serine hydroxymethyltransferase"/>
    <property type="match status" value="1"/>
</dbReference>
<dbReference type="Gene3D" id="3.90.1150.10">
    <property type="entry name" value="Aspartate Aminotransferase, domain 1"/>
    <property type="match status" value="1"/>
</dbReference>
<dbReference type="Gene3D" id="3.40.640.10">
    <property type="entry name" value="Type I PLP-dependent aspartate aminotransferase-like (Major domain)"/>
    <property type="match status" value="1"/>
</dbReference>
<dbReference type="HAMAP" id="MF_00051">
    <property type="entry name" value="SHMT"/>
    <property type="match status" value="1"/>
</dbReference>
<dbReference type="InterPro" id="IPR015424">
    <property type="entry name" value="PyrdxlP-dep_Trfase"/>
</dbReference>
<dbReference type="InterPro" id="IPR015421">
    <property type="entry name" value="PyrdxlP-dep_Trfase_major"/>
</dbReference>
<dbReference type="InterPro" id="IPR015422">
    <property type="entry name" value="PyrdxlP-dep_Trfase_small"/>
</dbReference>
<dbReference type="InterPro" id="IPR001085">
    <property type="entry name" value="Ser_HO-MeTrfase"/>
</dbReference>
<dbReference type="InterPro" id="IPR049943">
    <property type="entry name" value="Ser_HO-MeTrfase-like"/>
</dbReference>
<dbReference type="InterPro" id="IPR019798">
    <property type="entry name" value="Ser_HO-MeTrfase_PLP_BS"/>
</dbReference>
<dbReference type="InterPro" id="IPR039429">
    <property type="entry name" value="SHMT-like_dom"/>
</dbReference>
<dbReference type="NCBIfam" id="NF000586">
    <property type="entry name" value="PRK00011.1"/>
    <property type="match status" value="1"/>
</dbReference>
<dbReference type="PANTHER" id="PTHR11680">
    <property type="entry name" value="SERINE HYDROXYMETHYLTRANSFERASE"/>
    <property type="match status" value="1"/>
</dbReference>
<dbReference type="PANTHER" id="PTHR11680:SF35">
    <property type="entry name" value="SERINE HYDROXYMETHYLTRANSFERASE 1"/>
    <property type="match status" value="1"/>
</dbReference>
<dbReference type="Pfam" id="PF00464">
    <property type="entry name" value="SHMT"/>
    <property type="match status" value="1"/>
</dbReference>
<dbReference type="PIRSF" id="PIRSF000412">
    <property type="entry name" value="SHMT"/>
    <property type="match status" value="1"/>
</dbReference>
<dbReference type="SUPFAM" id="SSF53383">
    <property type="entry name" value="PLP-dependent transferases"/>
    <property type="match status" value="1"/>
</dbReference>
<dbReference type="PROSITE" id="PS00096">
    <property type="entry name" value="SHMT"/>
    <property type="match status" value="1"/>
</dbReference>
<comment type="function">
    <text evidence="1">Catalyzes the reversible interconversion of serine and glycine with tetrahydrofolate (THF) serving as the one-carbon carrier. This reaction serves as the major source of one-carbon groups required for the biosynthesis of purines, thymidylate, methionine, and other important biomolecules. Also exhibits THF-independent aldolase activity toward beta-hydroxyamino acids, producing glycine and aldehydes, via a retro-aldol mechanism.</text>
</comment>
<comment type="catalytic activity">
    <reaction evidence="1">
        <text>(6R)-5,10-methylene-5,6,7,8-tetrahydrofolate + glycine + H2O = (6S)-5,6,7,8-tetrahydrofolate + L-serine</text>
        <dbReference type="Rhea" id="RHEA:15481"/>
        <dbReference type="ChEBI" id="CHEBI:15377"/>
        <dbReference type="ChEBI" id="CHEBI:15636"/>
        <dbReference type="ChEBI" id="CHEBI:33384"/>
        <dbReference type="ChEBI" id="CHEBI:57305"/>
        <dbReference type="ChEBI" id="CHEBI:57453"/>
        <dbReference type="EC" id="2.1.2.1"/>
    </reaction>
</comment>
<comment type="cofactor">
    <cofactor evidence="1">
        <name>pyridoxal 5'-phosphate</name>
        <dbReference type="ChEBI" id="CHEBI:597326"/>
    </cofactor>
</comment>
<comment type="pathway">
    <text evidence="1">One-carbon metabolism; tetrahydrofolate interconversion.</text>
</comment>
<comment type="pathway">
    <text evidence="1">Amino-acid biosynthesis; glycine biosynthesis; glycine from L-serine: step 1/1.</text>
</comment>
<comment type="subunit">
    <text evidence="1">Homodimer.</text>
</comment>
<comment type="subcellular location">
    <subcellularLocation>
        <location evidence="1">Cytoplasm</location>
    </subcellularLocation>
</comment>
<comment type="similarity">
    <text evidence="1">Belongs to the SHMT family.</text>
</comment>
<protein>
    <recommendedName>
        <fullName evidence="1">Serine hydroxymethyltransferase</fullName>
        <shortName evidence="1">SHMT</shortName>
        <shortName evidence="1">Serine methylase</shortName>
        <ecNumber evidence="1">2.1.2.1</ecNumber>
    </recommendedName>
</protein>